<feature type="chain" id="PRO_1000062815" description="Undecaprenyl-diphosphatase">
    <location>
        <begin position="1"/>
        <end position="268"/>
    </location>
</feature>
<feature type="transmembrane region" description="Helical" evidence="1">
    <location>
        <begin position="5"/>
        <end position="25"/>
    </location>
</feature>
<feature type="transmembrane region" description="Helical" evidence="1">
    <location>
        <begin position="43"/>
        <end position="63"/>
    </location>
</feature>
<feature type="transmembrane region" description="Helical" evidence="1">
    <location>
        <begin position="84"/>
        <end position="104"/>
    </location>
</feature>
<feature type="transmembrane region" description="Helical" evidence="1">
    <location>
        <begin position="109"/>
        <end position="129"/>
    </location>
</feature>
<feature type="transmembrane region" description="Helical" evidence="1">
    <location>
        <begin position="184"/>
        <end position="204"/>
    </location>
</feature>
<feature type="transmembrane region" description="Helical" evidence="1">
    <location>
        <begin position="213"/>
        <end position="233"/>
    </location>
</feature>
<feature type="transmembrane region" description="Helical" evidence="1">
    <location>
        <begin position="248"/>
        <end position="268"/>
    </location>
</feature>
<reference key="1">
    <citation type="submission" date="2007-06" db="EMBL/GenBank/DDBJ databases">
        <title>Complete sequence of Sinorhizobium medicae WSM419 chromosome.</title>
        <authorList>
            <consortium name="US DOE Joint Genome Institute"/>
            <person name="Copeland A."/>
            <person name="Lucas S."/>
            <person name="Lapidus A."/>
            <person name="Barry K."/>
            <person name="Glavina del Rio T."/>
            <person name="Dalin E."/>
            <person name="Tice H."/>
            <person name="Pitluck S."/>
            <person name="Chain P."/>
            <person name="Malfatti S."/>
            <person name="Shin M."/>
            <person name="Vergez L."/>
            <person name="Schmutz J."/>
            <person name="Larimer F."/>
            <person name="Land M."/>
            <person name="Hauser L."/>
            <person name="Kyrpides N."/>
            <person name="Mikhailova N."/>
            <person name="Reeve W.G."/>
            <person name="Richardson P."/>
        </authorList>
    </citation>
    <scope>NUCLEOTIDE SEQUENCE [LARGE SCALE GENOMIC DNA]</scope>
    <source>
        <strain>WSM419</strain>
    </source>
</reference>
<sequence length="268" mass="28539">MADQSIISALVLGLIEGLTEFIPVSSTAHVLLAGHFLGFRSPGNTFAVLIQLGAILAILLVYFQKLLSIALALPTSVRARRFVLSVLLAFLPAALIGAAAHGFIKSVLFETPMLICVVLIVGGIILYVIDRLPLTPRYTDVFDYPPSLALKIGLFQCLAMIPGTSRSGATIAGALLMGTDKRSAAEFSFFLAMPTMVGAFALDLYKNREALSIDDIGLIAAGFIAAFIAGIFVVRSLLDFVSHRGFTPFAIWRILVGTAGLVGLWLLG</sequence>
<protein>
    <recommendedName>
        <fullName evidence="1">Undecaprenyl-diphosphatase</fullName>
        <ecNumber evidence="1">3.6.1.27</ecNumber>
    </recommendedName>
    <alternativeName>
        <fullName evidence="1">Bacitracin resistance protein</fullName>
    </alternativeName>
    <alternativeName>
        <fullName evidence="1">Undecaprenyl pyrophosphate phosphatase</fullName>
    </alternativeName>
</protein>
<evidence type="ECO:0000255" key="1">
    <source>
        <dbReference type="HAMAP-Rule" id="MF_01006"/>
    </source>
</evidence>
<name>UPPP_SINMW</name>
<gene>
    <name evidence="1" type="primary">uppP</name>
    <name type="ordered locus">Smed_3536</name>
</gene>
<comment type="function">
    <text evidence="1">Catalyzes the dephosphorylation of undecaprenyl diphosphate (UPP). Confers resistance to bacitracin.</text>
</comment>
<comment type="catalytic activity">
    <reaction evidence="1">
        <text>di-trans,octa-cis-undecaprenyl diphosphate + H2O = di-trans,octa-cis-undecaprenyl phosphate + phosphate + H(+)</text>
        <dbReference type="Rhea" id="RHEA:28094"/>
        <dbReference type="ChEBI" id="CHEBI:15377"/>
        <dbReference type="ChEBI" id="CHEBI:15378"/>
        <dbReference type="ChEBI" id="CHEBI:43474"/>
        <dbReference type="ChEBI" id="CHEBI:58405"/>
        <dbReference type="ChEBI" id="CHEBI:60392"/>
        <dbReference type="EC" id="3.6.1.27"/>
    </reaction>
</comment>
<comment type="subcellular location">
    <subcellularLocation>
        <location evidence="1">Cell inner membrane</location>
        <topology evidence="1">Multi-pass membrane protein</topology>
    </subcellularLocation>
</comment>
<comment type="miscellaneous">
    <text>Bacitracin is thought to be involved in the inhibition of peptidoglycan synthesis by sequestering undecaprenyl diphosphate, thereby reducing the pool of lipid carrier available.</text>
</comment>
<comment type="similarity">
    <text evidence="1">Belongs to the UppP family.</text>
</comment>
<organism>
    <name type="scientific">Sinorhizobium medicae (strain WSM419)</name>
    <name type="common">Ensifer medicae</name>
    <dbReference type="NCBI Taxonomy" id="366394"/>
    <lineage>
        <taxon>Bacteria</taxon>
        <taxon>Pseudomonadati</taxon>
        <taxon>Pseudomonadota</taxon>
        <taxon>Alphaproteobacteria</taxon>
        <taxon>Hyphomicrobiales</taxon>
        <taxon>Rhizobiaceae</taxon>
        <taxon>Sinorhizobium/Ensifer group</taxon>
        <taxon>Sinorhizobium</taxon>
    </lineage>
</organism>
<dbReference type="EC" id="3.6.1.27" evidence="1"/>
<dbReference type="EMBL" id="CP000738">
    <property type="protein sequence ID" value="ABR62352.1"/>
    <property type="molecule type" value="Genomic_DNA"/>
</dbReference>
<dbReference type="RefSeq" id="WP_012067731.1">
    <property type="nucleotide sequence ID" value="NC_009636.1"/>
</dbReference>
<dbReference type="RefSeq" id="YP_001329187.1">
    <property type="nucleotide sequence ID" value="NC_009636.1"/>
</dbReference>
<dbReference type="SMR" id="A6UFC2"/>
<dbReference type="STRING" id="366394.Smed_3536"/>
<dbReference type="KEGG" id="smd:Smed_3536"/>
<dbReference type="PATRIC" id="fig|366394.8.peg.6788"/>
<dbReference type="eggNOG" id="COG1968">
    <property type="taxonomic scope" value="Bacteria"/>
</dbReference>
<dbReference type="HOGENOM" id="CLU_060296_2_0_5"/>
<dbReference type="OrthoDB" id="9808289at2"/>
<dbReference type="Proteomes" id="UP000001108">
    <property type="component" value="Chromosome"/>
</dbReference>
<dbReference type="GO" id="GO:0005886">
    <property type="term" value="C:plasma membrane"/>
    <property type="evidence" value="ECO:0007669"/>
    <property type="project" value="UniProtKB-SubCell"/>
</dbReference>
<dbReference type="GO" id="GO:0050380">
    <property type="term" value="F:undecaprenyl-diphosphatase activity"/>
    <property type="evidence" value="ECO:0007669"/>
    <property type="project" value="UniProtKB-UniRule"/>
</dbReference>
<dbReference type="GO" id="GO:0071555">
    <property type="term" value="P:cell wall organization"/>
    <property type="evidence" value="ECO:0007669"/>
    <property type="project" value="UniProtKB-KW"/>
</dbReference>
<dbReference type="GO" id="GO:0009252">
    <property type="term" value="P:peptidoglycan biosynthetic process"/>
    <property type="evidence" value="ECO:0007669"/>
    <property type="project" value="UniProtKB-KW"/>
</dbReference>
<dbReference type="GO" id="GO:0008360">
    <property type="term" value="P:regulation of cell shape"/>
    <property type="evidence" value="ECO:0007669"/>
    <property type="project" value="UniProtKB-KW"/>
</dbReference>
<dbReference type="GO" id="GO:0046677">
    <property type="term" value="P:response to antibiotic"/>
    <property type="evidence" value="ECO:0007669"/>
    <property type="project" value="UniProtKB-UniRule"/>
</dbReference>
<dbReference type="HAMAP" id="MF_01006">
    <property type="entry name" value="Undec_diphosphatase"/>
    <property type="match status" value="1"/>
</dbReference>
<dbReference type="InterPro" id="IPR003824">
    <property type="entry name" value="UppP"/>
</dbReference>
<dbReference type="NCBIfam" id="NF001389">
    <property type="entry name" value="PRK00281.1-2"/>
    <property type="match status" value="1"/>
</dbReference>
<dbReference type="PANTHER" id="PTHR30622">
    <property type="entry name" value="UNDECAPRENYL-DIPHOSPHATASE"/>
    <property type="match status" value="1"/>
</dbReference>
<dbReference type="PANTHER" id="PTHR30622:SF3">
    <property type="entry name" value="UNDECAPRENYL-DIPHOSPHATASE"/>
    <property type="match status" value="1"/>
</dbReference>
<dbReference type="Pfam" id="PF02673">
    <property type="entry name" value="BacA"/>
    <property type="match status" value="1"/>
</dbReference>
<accession>A6UFC2</accession>
<keyword id="KW-0046">Antibiotic resistance</keyword>
<keyword id="KW-0997">Cell inner membrane</keyword>
<keyword id="KW-1003">Cell membrane</keyword>
<keyword id="KW-0133">Cell shape</keyword>
<keyword id="KW-0961">Cell wall biogenesis/degradation</keyword>
<keyword id="KW-0378">Hydrolase</keyword>
<keyword id="KW-0472">Membrane</keyword>
<keyword id="KW-0573">Peptidoglycan synthesis</keyword>
<keyword id="KW-0812">Transmembrane</keyword>
<keyword id="KW-1133">Transmembrane helix</keyword>
<proteinExistence type="inferred from homology"/>